<keyword id="KW-0025">Alternative splicing</keyword>
<keyword id="KW-0131">Cell cycle</keyword>
<keyword id="KW-0132">Cell division</keyword>
<keyword id="KW-0963">Cytoplasm</keyword>
<keyword id="KW-0498">Mitosis</keyword>
<keyword id="KW-0597">Phosphoprotein</keyword>
<keyword id="KW-1185">Reference proteome</keyword>
<keyword id="KW-0832">Ubl conjugation</keyword>
<keyword id="KW-0833">Ubl conjugation pathway</keyword>
<sequence length="266" mass="28708">MGSTQSVSGTPARPLPRNKQVARVADPRSPSAGIQRTPIQVESSPQPSLPAEQLNGLKQAQDPDPRSPTLGIARTPMKISGPDPQCSLVKELSEVLETEASESISSPELALPRETPLFYDLDLSSDPQLSPEDQLLPWSQAELDPKQVFTKEEAKQSAETIAASQNSDKPSRDPETPQSSGSKRSRRKANSKVLGRSPLTILQDDNSPGTLTLRQGKRPSALSENVKDLKEGVVLGTGRFLKAGGGAREPNQDHDKENQHFALLES</sequence>
<reference key="1">
    <citation type="journal article" date="1998" name="Genome Res.">
        <title>Comparative sequence analysis of a gene-rich cluster at human chromosome 12p13 and its syntenic region in mouse chromosome 6.</title>
        <authorList>
            <person name="Ansari-Lari M.A."/>
            <person name="Oeltjen J.C."/>
            <person name="Schwartz S."/>
            <person name="Zhang Z."/>
            <person name="Muzny D.M."/>
            <person name="Lu J."/>
            <person name="Gorrell J.H."/>
            <person name="Chinault A.C."/>
            <person name="Belmont J.W."/>
            <person name="Miller W."/>
            <person name="Gibbs R.A."/>
        </authorList>
    </citation>
    <scope>NUCLEOTIDE SEQUENCE [GENOMIC DNA]</scope>
</reference>
<reference key="2">
    <citation type="journal article" date="2005" name="Science">
        <title>The transcriptional landscape of the mammalian genome.</title>
        <authorList>
            <person name="Carninci P."/>
            <person name="Kasukawa T."/>
            <person name="Katayama S."/>
            <person name="Gough J."/>
            <person name="Frith M.C."/>
            <person name="Maeda N."/>
            <person name="Oyama R."/>
            <person name="Ravasi T."/>
            <person name="Lenhard B."/>
            <person name="Wells C."/>
            <person name="Kodzius R."/>
            <person name="Shimokawa K."/>
            <person name="Bajic V.B."/>
            <person name="Brenner S.E."/>
            <person name="Batalov S."/>
            <person name="Forrest A.R."/>
            <person name="Zavolan M."/>
            <person name="Davis M.J."/>
            <person name="Wilming L.G."/>
            <person name="Aidinis V."/>
            <person name="Allen J.E."/>
            <person name="Ambesi-Impiombato A."/>
            <person name="Apweiler R."/>
            <person name="Aturaliya R.N."/>
            <person name="Bailey T.L."/>
            <person name="Bansal M."/>
            <person name="Baxter L."/>
            <person name="Beisel K.W."/>
            <person name="Bersano T."/>
            <person name="Bono H."/>
            <person name="Chalk A.M."/>
            <person name="Chiu K.P."/>
            <person name="Choudhary V."/>
            <person name="Christoffels A."/>
            <person name="Clutterbuck D.R."/>
            <person name="Crowe M.L."/>
            <person name="Dalla E."/>
            <person name="Dalrymple B.P."/>
            <person name="de Bono B."/>
            <person name="Della Gatta G."/>
            <person name="di Bernardo D."/>
            <person name="Down T."/>
            <person name="Engstrom P."/>
            <person name="Fagiolini M."/>
            <person name="Faulkner G."/>
            <person name="Fletcher C.F."/>
            <person name="Fukushima T."/>
            <person name="Furuno M."/>
            <person name="Futaki S."/>
            <person name="Gariboldi M."/>
            <person name="Georgii-Hemming P."/>
            <person name="Gingeras T.R."/>
            <person name="Gojobori T."/>
            <person name="Green R.E."/>
            <person name="Gustincich S."/>
            <person name="Harbers M."/>
            <person name="Hayashi Y."/>
            <person name="Hensch T.K."/>
            <person name="Hirokawa N."/>
            <person name="Hill D."/>
            <person name="Huminiecki L."/>
            <person name="Iacono M."/>
            <person name="Ikeo K."/>
            <person name="Iwama A."/>
            <person name="Ishikawa T."/>
            <person name="Jakt M."/>
            <person name="Kanapin A."/>
            <person name="Katoh M."/>
            <person name="Kawasawa Y."/>
            <person name="Kelso J."/>
            <person name="Kitamura H."/>
            <person name="Kitano H."/>
            <person name="Kollias G."/>
            <person name="Krishnan S.P."/>
            <person name="Kruger A."/>
            <person name="Kummerfeld S.K."/>
            <person name="Kurochkin I.V."/>
            <person name="Lareau L.F."/>
            <person name="Lazarevic D."/>
            <person name="Lipovich L."/>
            <person name="Liu J."/>
            <person name="Liuni S."/>
            <person name="McWilliam S."/>
            <person name="Madan Babu M."/>
            <person name="Madera M."/>
            <person name="Marchionni L."/>
            <person name="Matsuda H."/>
            <person name="Matsuzawa S."/>
            <person name="Miki H."/>
            <person name="Mignone F."/>
            <person name="Miyake S."/>
            <person name="Morris K."/>
            <person name="Mottagui-Tabar S."/>
            <person name="Mulder N."/>
            <person name="Nakano N."/>
            <person name="Nakauchi H."/>
            <person name="Ng P."/>
            <person name="Nilsson R."/>
            <person name="Nishiguchi S."/>
            <person name="Nishikawa S."/>
            <person name="Nori F."/>
            <person name="Ohara O."/>
            <person name="Okazaki Y."/>
            <person name="Orlando V."/>
            <person name="Pang K.C."/>
            <person name="Pavan W.J."/>
            <person name="Pavesi G."/>
            <person name="Pesole G."/>
            <person name="Petrovsky N."/>
            <person name="Piazza S."/>
            <person name="Reed J."/>
            <person name="Reid J.F."/>
            <person name="Ring B.Z."/>
            <person name="Ringwald M."/>
            <person name="Rost B."/>
            <person name="Ruan Y."/>
            <person name="Salzberg S.L."/>
            <person name="Sandelin A."/>
            <person name="Schneider C."/>
            <person name="Schoenbach C."/>
            <person name="Sekiguchi K."/>
            <person name="Semple C.A."/>
            <person name="Seno S."/>
            <person name="Sessa L."/>
            <person name="Sheng Y."/>
            <person name="Shibata Y."/>
            <person name="Shimada H."/>
            <person name="Shimada K."/>
            <person name="Silva D."/>
            <person name="Sinclair B."/>
            <person name="Sperling S."/>
            <person name="Stupka E."/>
            <person name="Sugiura K."/>
            <person name="Sultana R."/>
            <person name="Takenaka Y."/>
            <person name="Taki K."/>
            <person name="Tammoja K."/>
            <person name="Tan S.L."/>
            <person name="Tang S."/>
            <person name="Taylor M.S."/>
            <person name="Tegner J."/>
            <person name="Teichmann S.A."/>
            <person name="Ueda H.R."/>
            <person name="van Nimwegen E."/>
            <person name="Verardo R."/>
            <person name="Wei C.L."/>
            <person name="Yagi K."/>
            <person name="Yamanishi H."/>
            <person name="Zabarovsky E."/>
            <person name="Zhu S."/>
            <person name="Zimmer A."/>
            <person name="Hide W."/>
            <person name="Bult C."/>
            <person name="Grimmond S.M."/>
            <person name="Teasdale R.D."/>
            <person name="Liu E.T."/>
            <person name="Brusic V."/>
            <person name="Quackenbush J."/>
            <person name="Wahlestedt C."/>
            <person name="Mattick J.S."/>
            <person name="Hume D.A."/>
            <person name="Kai C."/>
            <person name="Sasaki D."/>
            <person name="Tomaru Y."/>
            <person name="Fukuda S."/>
            <person name="Kanamori-Katayama M."/>
            <person name="Suzuki M."/>
            <person name="Aoki J."/>
            <person name="Arakawa T."/>
            <person name="Iida J."/>
            <person name="Imamura K."/>
            <person name="Itoh M."/>
            <person name="Kato T."/>
            <person name="Kawaji H."/>
            <person name="Kawagashira N."/>
            <person name="Kawashima T."/>
            <person name="Kojima M."/>
            <person name="Kondo S."/>
            <person name="Konno H."/>
            <person name="Nakano K."/>
            <person name="Ninomiya N."/>
            <person name="Nishio T."/>
            <person name="Okada M."/>
            <person name="Plessy C."/>
            <person name="Shibata K."/>
            <person name="Shiraki T."/>
            <person name="Suzuki S."/>
            <person name="Tagami M."/>
            <person name="Waki K."/>
            <person name="Watahiki A."/>
            <person name="Okamura-Oho Y."/>
            <person name="Suzuki H."/>
            <person name="Kawai J."/>
            <person name="Hayashizaki Y."/>
        </authorList>
    </citation>
    <scope>NUCLEOTIDE SEQUENCE [LARGE SCALE MRNA] (ISOFORM 1)</scope>
    <source>
        <strain>C57BL/6J</strain>
        <strain>NOD</strain>
        <tissue>Small intestine</tissue>
        <tissue>Thymus</tissue>
    </source>
</reference>
<reference key="3">
    <citation type="journal article" date="2009" name="PLoS Biol.">
        <title>Lineage-specific biology revealed by a finished genome assembly of the mouse.</title>
        <authorList>
            <person name="Church D.M."/>
            <person name="Goodstadt L."/>
            <person name="Hillier L.W."/>
            <person name="Zody M.C."/>
            <person name="Goldstein S."/>
            <person name="She X."/>
            <person name="Bult C.J."/>
            <person name="Agarwala R."/>
            <person name="Cherry J.L."/>
            <person name="DiCuccio M."/>
            <person name="Hlavina W."/>
            <person name="Kapustin Y."/>
            <person name="Meric P."/>
            <person name="Maglott D."/>
            <person name="Birtle Z."/>
            <person name="Marques A.C."/>
            <person name="Graves T."/>
            <person name="Zhou S."/>
            <person name="Teague B."/>
            <person name="Potamousis K."/>
            <person name="Churas C."/>
            <person name="Place M."/>
            <person name="Herschleb J."/>
            <person name="Runnheim R."/>
            <person name="Forrest D."/>
            <person name="Amos-Landgraf J."/>
            <person name="Schwartz D.C."/>
            <person name="Cheng Z."/>
            <person name="Lindblad-Toh K."/>
            <person name="Eichler E.E."/>
            <person name="Ponting C.P."/>
        </authorList>
    </citation>
    <scope>NUCLEOTIDE SEQUENCE [LARGE SCALE GENOMIC DNA]</scope>
    <source>
        <strain>C57BL/6J</strain>
    </source>
</reference>
<reference key="4">
    <citation type="journal article" date="2004" name="Genome Res.">
        <title>The status, quality, and expansion of the NIH full-length cDNA project: the Mammalian Gene Collection (MGC).</title>
        <authorList>
            <consortium name="The MGC Project Team"/>
        </authorList>
    </citation>
    <scope>NUCLEOTIDE SEQUENCE [LARGE SCALE MRNA] (ISOFORMS 1 AND 2)</scope>
    <source>
        <strain>Czech II</strain>
        <strain>FVB/N</strain>
        <tissue>Mammary tumor</tissue>
    </source>
</reference>
<reference key="5">
    <citation type="journal article" date="2003" name="Cell">
        <title>Tome-1, a trigger of mitotic entry, is degraded during G1 via the APC.</title>
        <authorList>
            <person name="Ayad N.G."/>
            <person name="Rankin S."/>
            <person name="Murakami M."/>
            <person name="Jebanathirajah J."/>
            <person name="Gygi S.P."/>
            <person name="Kirschner M.W."/>
        </authorList>
    </citation>
    <scope>INTERACTION WITH SKP1</scope>
</reference>
<reference key="6">
    <citation type="journal article" date="2009" name="Immunity">
        <title>The phagosomal proteome in interferon-gamma-activated macrophages.</title>
        <authorList>
            <person name="Trost M."/>
            <person name="English L."/>
            <person name="Lemieux S."/>
            <person name="Courcelles M."/>
            <person name="Desjardins M."/>
            <person name="Thibault P."/>
        </authorList>
    </citation>
    <scope>PHOSPHORYLATION [LARGE SCALE ANALYSIS] AT SER-29 AND SER-67</scope>
    <scope>IDENTIFICATION BY MASS SPECTROMETRY [LARGE SCALE ANALYSIS]</scope>
</reference>
<reference key="7">
    <citation type="journal article" date="2010" name="Cell">
        <title>A tissue-specific atlas of mouse protein phosphorylation and expression.</title>
        <authorList>
            <person name="Huttlin E.L."/>
            <person name="Jedrychowski M.P."/>
            <person name="Elias J.E."/>
            <person name="Goswami T."/>
            <person name="Rad R."/>
            <person name="Beausoleil S.A."/>
            <person name="Villen J."/>
            <person name="Haas W."/>
            <person name="Sowa M.E."/>
            <person name="Gygi S.P."/>
        </authorList>
    </citation>
    <scope>PHOSPHORYLATION [LARGE SCALE ANALYSIS] AT SER-197; SER-207 AND THR-210</scope>
    <scope>IDENTIFICATION BY MASS SPECTROMETRY [LARGE SCALE ANALYSIS]</scope>
    <source>
        <tissue>Lung</tissue>
        <tissue>Spleen</tissue>
        <tissue>Testis</tissue>
    </source>
</reference>
<dbReference type="EMBL" id="AK008606">
    <property type="protein sequence ID" value="BAB25773.1"/>
    <property type="molecule type" value="mRNA"/>
</dbReference>
<dbReference type="EMBL" id="AK010409">
    <property type="protein sequence ID" value="BAB26916.1"/>
    <property type="molecule type" value="mRNA"/>
</dbReference>
<dbReference type="EMBL" id="AK011313">
    <property type="protein sequence ID" value="BAB27539.1"/>
    <property type="molecule type" value="mRNA"/>
</dbReference>
<dbReference type="EMBL" id="AK028159">
    <property type="protein sequence ID" value="BAC25785.1"/>
    <property type="molecule type" value="mRNA"/>
</dbReference>
<dbReference type="EMBL" id="AK145537">
    <property type="protein sequence ID" value="BAE26492.1"/>
    <property type="molecule type" value="mRNA"/>
</dbReference>
<dbReference type="EMBL" id="AK169792">
    <property type="protein sequence ID" value="BAE41370.1"/>
    <property type="molecule type" value="mRNA"/>
</dbReference>
<dbReference type="EMBL" id="AC002397">
    <property type="protein sequence ID" value="AAC36014.1"/>
    <property type="molecule type" value="Genomic_DNA"/>
</dbReference>
<dbReference type="EMBL" id="BC002006">
    <property type="protein sequence ID" value="AAH02006.1"/>
    <property type="molecule type" value="mRNA"/>
</dbReference>
<dbReference type="EMBL" id="BC027172">
    <property type="protein sequence ID" value="AAH27172.1"/>
    <property type="status" value="ALT_INIT"/>
    <property type="molecule type" value="mRNA"/>
</dbReference>
<dbReference type="CCDS" id="CCDS39629.1">
    <molecule id="Q99M54-1"/>
</dbReference>
<dbReference type="RefSeq" id="NP_038566.1">
    <molecule id="Q99M54-1"/>
    <property type="nucleotide sequence ID" value="NM_013538.5"/>
</dbReference>
<dbReference type="RefSeq" id="XP_006505627.1">
    <molecule id="Q99M54-1"/>
    <property type="nucleotide sequence ID" value="XM_006505564.5"/>
</dbReference>
<dbReference type="RefSeq" id="XP_017176884.1">
    <property type="nucleotide sequence ID" value="XM_017321395.1"/>
</dbReference>
<dbReference type="SMR" id="Q99M54"/>
<dbReference type="BioGRID" id="200054">
    <property type="interactions" value="1"/>
</dbReference>
<dbReference type="FunCoup" id="Q99M54">
    <property type="interactions" value="97"/>
</dbReference>
<dbReference type="STRING" id="10090.ENSMUSP00000024270"/>
<dbReference type="iPTMnet" id="Q99M54"/>
<dbReference type="PhosphoSitePlus" id="Q99M54"/>
<dbReference type="jPOST" id="Q99M54"/>
<dbReference type="PaxDb" id="10090-ENSMUSP00000024270"/>
<dbReference type="PeptideAtlas" id="Q99M54"/>
<dbReference type="ProteomicsDB" id="281141">
    <molecule id="Q99M54-1"/>
</dbReference>
<dbReference type="ProteomicsDB" id="281142">
    <molecule id="Q99M54-2"/>
</dbReference>
<dbReference type="Pumba" id="Q99M54"/>
<dbReference type="Antibodypedia" id="11223">
    <property type="antibodies" value="206 antibodies from 33 providers"/>
</dbReference>
<dbReference type="DNASU" id="14793"/>
<dbReference type="Ensembl" id="ENSMUST00000024270.14">
    <molecule id="Q99M54-1"/>
    <property type="protein sequence ID" value="ENSMUSP00000024270.8"/>
    <property type="gene ID" value="ENSMUSG00000023505.14"/>
</dbReference>
<dbReference type="GeneID" id="14793"/>
<dbReference type="KEGG" id="mmu:14793"/>
<dbReference type="UCSC" id="uc009dsc.2">
    <molecule id="Q99M54-1"/>
    <property type="organism name" value="mouse"/>
</dbReference>
<dbReference type="AGR" id="MGI:1315198"/>
<dbReference type="CTD" id="83461"/>
<dbReference type="MGI" id="MGI:1315198">
    <property type="gene designation" value="Cdca3"/>
</dbReference>
<dbReference type="VEuPathDB" id="HostDB:ENSMUSG00000023505"/>
<dbReference type="eggNOG" id="ENOG502S7V2">
    <property type="taxonomic scope" value="Eukaryota"/>
</dbReference>
<dbReference type="GeneTree" id="ENSGT00390000017343"/>
<dbReference type="HOGENOM" id="CLU_091723_0_0_1"/>
<dbReference type="InParanoid" id="Q99M54"/>
<dbReference type="OMA" id="KITGRAW"/>
<dbReference type="OrthoDB" id="6337960at2759"/>
<dbReference type="PhylomeDB" id="Q99M54"/>
<dbReference type="TreeFam" id="TF101068"/>
<dbReference type="UniPathway" id="UPA00143"/>
<dbReference type="BioGRID-ORCS" id="14793">
    <property type="hits" value="10 hits in 79 CRISPR screens"/>
</dbReference>
<dbReference type="ChiTaRS" id="Cdca3">
    <property type="organism name" value="mouse"/>
</dbReference>
<dbReference type="PRO" id="PR:Q99M54"/>
<dbReference type="Proteomes" id="UP000000589">
    <property type="component" value="Chromosome 6"/>
</dbReference>
<dbReference type="RNAct" id="Q99M54">
    <property type="molecule type" value="protein"/>
</dbReference>
<dbReference type="Bgee" id="ENSMUSG00000023505">
    <property type="expression patterns" value="Expressed in ventricular zone and 201 other cell types or tissues"/>
</dbReference>
<dbReference type="ExpressionAtlas" id="Q99M54">
    <property type="expression patterns" value="baseline and differential"/>
</dbReference>
<dbReference type="GO" id="GO:0005912">
    <property type="term" value="C:adherens junction"/>
    <property type="evidence" value="ECO:0007669"/>
    <property type="project" value="Ensembl"/>
</dbReference>
<dbReference type="GO" id="GO:0005829">
    <property type="term" value="C:cytosol"/>
    <property type="evidence" value="ECO:0007669"/>
    <property type="project" value="UniProtKB-SubCell"/>
</dbReference>
<dbReference type="GO" id="GO:0051301">
    <property type="term" value="P:cell division"/>
    <property type="evidence" value="ECO:0007669"/>
    <property type="project" value="UniProtKB-KW"/>
</dbReference>
<dbReference type="GO" id="GO:0016567">
    <property type="term" value="P:protein ubiquitination"/>
    <property type="evidence" value="ECO:0007669"/>
    <property type="project" value="UniProtKB-UniPathway"/>
</dbReference>
<dbReference type="InterPro" id="IPR038832">
    <property type="entry name" value="CDCA3"/>
</dbReference>
<dbReference type="PANTHER" id="PTHR34756">
    <property type="entry name" value="CELL DIVISION CYCLE-ASSOCIATED PROTEIN 3"/>
    <property type="match status" value="1"/>
</dbReference>
<dbReference type="PANTHER" id="PTHR34756:SF1">
    <property type="entry name" value="CELL DIVISION CYCLE-ASSOCIATED PROTEIN 3"/>
    <property type="match status" value="1"/>
</dbReference>
<name>CDCA3_MOUSE</name>
<gene>
    <name type="primary">Cdca3</name>
    <name type="synonym">C8</name>
    <name type="synonym">Grcc8</name>
    <name type="synonym">Tome1</name>
</gene>
<proteinExistence type="evidence at protein level"/>
<feature type="chain" id="PRO_0000287709" description="Cell division cycle-associated protein 3">
    <location>
        <begin position="1"/>
        <end position="266"/>
    </location>
</feature>
<feature type="region of interest" description="Disordered" evidence="3">
    <location>
        <begin position="1"/>
        <end position="84"/>
    </location>
</feature>
<feature type="region of interest" description="F-box-like">
    <location>
        <begin position="90"/>
        <end position="119"/>
    </location>
</feature>
<feature type="region of interest" description="Disordered" evidence="3">
    <location>
        <begin position="120"/>
        <end position="225"/>
    </location>
</feature>
<feature type="region of interest" description="Disordered" evidence="3">
    <location>
        <begin position="242"/>
        <end position="266"/>
    </location>
</feature>
<feature type="short sequence motif" description="KEN box">
    <location>
        <begin position="256"/>
        <end position="258"/>
    </location>
</feature>
<feature type="compositionally biased region" description="Polar residues" evidence="3">
    <location>
        <begin position="32"/>
        <end position="46"/>
    </location>
</feature>
<feature type="compositionally biased region" description="Basic and acidic residues" evidence="3">
    <location>
        <begin position="143"/>
        <end position="156"/>
    </location>
</feature>
<feature type="compositionally biased region" description="Polar residues" evidence="3">
    <location>
        <begin position="157"/>
        <end position="168"/>
    </location>
</feature>
<feature type="compositionally biased region" description="Polar residues" evidence="3">
    <location>
        <begin position="203"/>
        <end position="213"/>
    </location>
</feature>
<feature type="compositionally biased region" description="Basic and acidic residues" evidence="3">
    <location>
        <begin position="250"/>
        <end position="259"/>
    </location>
</feature>
<feature type="modified residue" description="Phosphoserine" evidence="7">
    <location>
        <position position="29"/>
    </location>
</feature>
<feature type="modified residue" description="Phosphoserine" evidence="2">
    <location>
        <position position="31"/>
    </location>
</feature>
<feature type="modified residue" description="Phosphothreonine" evidence="2">
    <location>
        <position position="37"/>
    </location>
</feature>
<feature type="modified residue" description="Phosphoserine" evidence="2">
    <location>
        <position position="44"/>
    </location>
</feature>
<feature type="modified residue" description="Phosphoserine" evidence="7">
    <location>
        <position position="67"/>
    </location>
</feature>
<feature type="modified residue" description="Phosphothreonine" evidence="2">
    <location>
        <position position="75"/>
    </location>
</feature>
<feature type="modified residue" description="Phosphoserine" evidence="2">
    <location>
        <position position="93"/>
    </location>
</feature>
<feature type="modified residue" description="Phosphoserine" evidence="8">
    <location>
        <position position="197"/>
    </location>
</feature>
<feature type="modified residue" description="Phosphothreonine" evidence="2">
    <location>
        <position position="200"/>
    </location>
</feature>
<feature type="modified residue" description="Phosphoserine" evidence="8">
    <location>
        <position position="207"/>
    </location>
</feature>
<feature type="modified residue" description="Phosphothreonine" evidence="8">
    <location>
        <position position="210"/>
    </location>
</feature>
<feature type="splice variant" id="VSP_025606" description="In isoform 2." evidence="5">
    <original>DP</original>
    <variation>GK</variation>
    <location>
        <begin position="83"/>
        <end position="84"/>
    </location>
</feature>
<feature type="splice variant" id="VSP_025607" description="In isoform 2." evidence="5">
    <location>
        <begin position="85"/>
        <end position="266"/>
    </location>
</feature>
<feature type="sequence conflict" description="In Ref. 4; AAH02006." evidence="6" ref="4">
    <original>Y</original>
    <variation>S</variation>
    <location>
        <position position="119"/>
    </location>
</feature>
<feature type="sequence conflict" description="In Ref. 4; AAH02006." evidence="6" ref="4">
    <original>D</original>
    <variation>G</variation>
    <location>
        <position position="126"/>
    </location>
</feature>
<organism>
    <name type="scientific">Mus musculus</name>
    <name type="common">Mouse</name>
    <dbReference type="NCBI Taxonomy" id="10090"/>
    <lineage>
        <taxon>Eukaryota</taxon>
        <taxon>Metazoa</taxon>
        <taxon>Chordata</taxon>
        <taxon>Craniata</taxon>
        <taxon>Vertebrata</taxon>
        <taxon>Euteleostomi</taxon>
        <taxon>Mammalia</taxon>
        <taxon>Eutheria</taxon>
        <taxon>Euarchontoglires</taxon>
        <taxon>Glires</taxon>
        <taxon>Rodentia</taxon>
        <taxon>Myomorpha</taxon>
        <taxon>Muroidea</taxon>
        <taxon>Muridae</taxon>
        <taxon>Murinae</taxon>
        <taxon>Mus</taxon>
        <taxon>Mus</taxon>
    </lineage>
</organism>
<comment type="function">
    <text evidence="1">F-box-like protein which is required for entry into mitosis. Acts by participating in E3 ligase complexes that mediate the ubiquitination and degradation of WEE1 kinase at G2/M phase (By similarity).</text>
</comment>
<comment type="pathway">
    <text>Protein modification; protein ubiquitination.</text>
</comment>
<comment type="subunit">
    <text evidence="4">Interacts with SKP1. Part of a SCF (SKP1-cullin-F-box) protein ligase complex.</text>
</comment>
<comment type="subcellular location">
    <subcellularLocation>
        <location evidence="1">Cytoplasm</location>
        <location evidence="1">Cytosol</location>
    </subcellularLocation>
</comment>
<comment type="alternative products">
    <event type="alternative splicing"/>
    <isoform>
        <id>Q99M54-1</id>
        <name>1</name>
        <sequence type="displayed"/>
    </isoform>
    <isoform>
        <id>Q99M54-2</id>
        <name>2</name>
        <sequence type="described" ref="VSP_025606 VSP_025607"/>
    </isoform>
</comment>
<comment type="domain">
    <text evidence="1">The KEN box is required for the association with the APC/C-Cdh1 complex.</text>
</comment>
<comment type="PTM">
    <text evidence="1">Ubiquitinated and degraded by the APC/C-Cdh1 complex.</text>
</comment>
<comment type="sequence caution" evidence="6">
    <conflict type="erroneous initiation">
        <sequence resource="EMBL-CDS" id="AAH27172"/>
    </conflict>
</comment>
<protein>
    <recommendedName>
        <fullName>Cell division cycle-associated protein 3</fullName>
    </recommendedName>
    <alternativeName>
        <fullName>Gene-rich cluster protein C8</fullName>
    </alternativeName>
    <alternativeName>
        <fullName>Trigger of mitotic entry protein 1</fullName>
        <shortName>TOME-1</shortName>
    </alternativeName>
</protein>
<accession>Q99M54</accession>
<accession>O88837</accession>
<accession>Q8R2V1</accession>
<evidence type="ECO:0000250" key="1"/>
<evidence type="ECO:0000250" key="2">
    <source>
        <dbReference type="UniProtKB" id="Q99618"/>
    </source>
</evidence>
<evidence type="ECO:0000256" key="3">
    <source>
        <dbReference type="SAM" id="MobiDB-lite"/>
    </source>
</evidence>
<evidence type="ECO:0000269" key="4">
    <source>
    </source>
</evidence>
<evidence type="ECO:0000303" key="5">
    <source>
    </source>
</evidence>
<evidence type="ECO:0000305" key="6"/>
<evidence type="ECO:0007744" key="7">
    <source>
    </source>
</evidence>
<evidence type="ECO:0007744" key="8">
    <source>
    </source>
</evidence>